<evidence type="ECO:0000250" key="1"/>
<evidence type="ECO:0000305" key="2"/>
<protein>
    <recommendedName>
        <fullName>Trypsin inhibitor 3</fullName>
    </recommendedName>
    <alternativeName>
        <fullName>CMCTI-III</fullName>
    </alternativeName>
    <alternativeName>
        <fullName>Trypsin inhibitor III</fullName>
    </alternativeName>
    <component>
        <recommendedName>
            <fullName>Trypsin inhibitor 2</fullName>
        </recommendedName>
        <alternativeName>
            <fullName>CMCT-II</fullName>
        </alternativeName>
        <alternativeName>
            <fullName>CMeTI-A</fullName>
        </alternativeName>
        <alternativeName>
            <fullName>Trypsin inhibitor II</fullName>
        </alternativeName>
    </component>
    <component>
        <recommendedName>
            <fullName>Trypsin inhibitor 1</fullName>
        </recommendedName>
        <alternativeName>
            <fullName>CMCTI-I</fullName>
        </alternativeName>
        <alternativeName>
            <fullName>Trypsin inhibitor I</fullName>
        </alternativeName>
    </component>
</protein>
<organism>
    <name type="scientific">Cucumis melo var. conomon</name>
    <name type="common">Oriental pickling melon</name>
    <dbReference type="NCBI Taxonomy" id="3657"/>
    <lineage>
        <taxon>Eukaryota</taxon>
        <taxon>Viridiplantae</taxon>
        <taxon>Streptophyta</taxon>
        <taxon>Embryophyta</taxon>
        <taxon>Tracheophyta</taxon>
        <taxon>Spermatophyta</taxon>
        <taxon>Magnoliopsida</taxon>
        <taxon>eudicotyledons</taxon>
        <taxon>Gunneridae</taxon>
        <taxon>Pentapetalae</taxon>
        <taxon>rosids</taxon>
        <taxon>fabids</taxon>
        <taxon>Cucurbitales</taxon>
        <taxon>Cucurbitaceae</taxon>
        <taxon>Benincaseae</taxon>
        <taxon>Cucumis</taxon>
    </lineage>
</organism>
<reference key="1">
    <citation type="journal article" date="1992" name="Biosci. Biotechnol. Biochem.">
        <title>Amino acid sequences of trypsin inhibitors from oriental pickling melon (Cucumis melo L. var. Conomon Makino) seeds.</title>
        <authorList>
            <person name="Nishino J."/>
            <person name="Takano R."/>
            <person name="Kamei-Hayashi K."/>
            <person name="Minakata H."/>
            <person name="Nomoto K."/>
            <person name="Hara S."/>
        </authorList>
    </citation>
    <scope>PROTEIN SEQUENCE</scope>
    <source>
        <tissue>Seed</tissue>
    </source>
</reference>
<reference key="2">
    <citation type="journal article" date="1995" name="J. Biochem.">
        <title>Amino acid sequences of trypsin inhibitors from the melon Cucumis melo.</title>
        <authorList>
            <person name="Lee C.F."/>
            <person name="Lin J.Y."/>
        </authorList>
    </citation>
    <scope>PROTEIN SEQUENCE (CMCT-II)</scope>
    <source>
        <tissue>Seed</tissue>
    </source>
</reference>
<dbReference type="PIR" id="PC1113">
    <property type="entry name" value="PC1113"/>
</dbReference>
<dbReference type="SMR" id="P32041"/>
<dbReference type="MEROPS" id="I07.013"/>
<dbReference type="GO" id="GO:0005576">
    <property type="term" value="C:extracellular region"/>
    <property type="evidence" value="ECO:0007669"/>
    <property type="project" value="UniProtKB-SubCell"/>
</dbReference>
<dbReference type="GO" id="GO:0004867">
    <property type="term" value="F:serine-type endopeptidase inhibitor activity"/>
    <property type="evidence" value="ECO:0007669"/>
    <property type="project" value="UniProtKB-KW"/>
</dbReference>
<dbReference type="CDD" id="cd00150">
    <property type="entry name" value="PlantTI"/>
    <property type="match status" value="1"/>
</dbReference>
<dbReference type="Gene3D" id="4.10.75.20">
    <property type="match status" value="1"/>
</dbReference>
<dbReference type="InterPro" id="IPR000737">
    <property type="entry name" value="Prot_inh_squash"/>
</dbReference>
<dbReference type="InterPro" id="IPR011052">
    <property type="entry name" value="Proteinase_amylase_inhib_sf"/>
</dbReference>
<dbReference type="Pfam" id="PF00299">
    <property type="entry name" value="Squash"/>
    <property type="match status" value="1"/>
</dbReference>
<dbReference type="PRINTS" id="PR00293">
    <property type="entry name" value="SQUASHINHBTR"/>
</dbReference>
<dbReference type="SMART" id="SM00286">
    <property type="entry name" value="PTI"/>
    <property type="match status" value="1"/>
</dbReference>
<dbReference type="SUPFAM" id="SSF57027">
    <property type="entry name" value="Plant inhibitors of proteinases and amylases"/>
    <property type="match status" value="1"/>
</dbReference>
<dbReference type="PROSITE" id="PS00286">
    <property type="entry name" value="SQUASH_INHIBITOR"/>
    <property type="match status" value="1"/>
</dbReference>
<keyword id="KW-0903">Direct protein sequencing</keyword>
<keyword id="KW-1015">Disulfide bond</keyword>
<keyword id="KW-0960">Knottin</keyword>
<keyword id="KW-0646">Protease inhibitor</keyword>
<keyword id="KW-0964">Secreted</keyword>
<keyword id="KW-0722">Serine protease inhibitor</keyword>
<sequence>QRMCPKILMKCKQDSDCLLDCVCLKEGFCG</sequence>
<proteinExistence type="evidence at protein level"/>
<name>ITR3_CUCMC</name>
<comment type="function">
    <text>Inhibits lysyl endopeptidase and trypsin.</text>
</comment>
<comment type="subcellular location">
    <subcellularLocation>
        <location>Secreted</location>
    </subcellularLocation>
</comment>
<comment type="domain">
    <text evidence="1">The presence of a 'disulfide through disulfide knot' structurally defines this protein as a knottin.</text>
</comment>
<comment type="similarity">
    <text evidence="2">Belongs to the protease inhibitor I7 (squash-type serine protease inhibitor) family.</text>
</comment>
<accession>P32041</accession>
<accession>Q9S748</accession>
<feature type="peptide" id="PRO_0000033201" description="Trypsin inhibitor 3">
    <location>
        <begin position="1"/>
        <end position="30"/>
    </location>
</feature>
<feature type="peptide" id="PRO_0000033202" description="Trypsin inhibitor 2">
    <location>
        <begin position="2"/>
        <end position="30"/>
    </location>
</feature>
<feature type="peptide" id="PRO_0000033203" description="Trypsin inhibitor 1">
    <location>
        <begin position="3"/>
        <end position="30"/>
    </location>
</feature>
<feature type="site" description="Reactive bond">
    <location>
        <begin position="6"/>
        <end position="7"/>
    </location>
</feature>
<feature type="disulfide bond" evidence="1">
    <location>
        <begin position="4"/>
        <end position="21"/>
    </location>
</feature>
<feature type="disulfide bond" evidence="1">
    <location>
        <begin position="11"/>
        <end position="23"/>
    </location>
</feature>
<feature type="disulfide bond" evidence="1">
    <location>
        <begin position="17"/>
        <end position="29"/>
    </location>
</feature>